<organism>
    <name type="scientific">Rickettsia bellii (strain RML369-C)</name>
    <dbReference type="NCBI Taxonomy" id="336407"/>
    <lineage>
        <taxon>Bacteria</taxon>
        <taxon>Pseudomonadati</taxon>
        <taxon>Pseudomonadota</taxon>
        <taxon>Alphaproteobacteria</taxon>
        <taxon>Rickettsiales</taxon>
        <taxon>Rickettsiaceae</taxon>
        <taxon>Rickettsieae</taxon>
        <taxon>Rickettsia</taxon>
        <taxon>belli group</taxon>
    </lineage>
</organism>
<proteinExistence type="inferred from homology"/>
<name>KAD_RICBR</name>
<comment type="function">
    <text evidence="1">Catalyzes the reversible transfer of the terminal phosphate group between ATP and AMP. Plays an important role in cellular energy homeostasis and in adenine nucleotide metabolism.</text>
</comment>
<comment type="catalytic activity">
    <reaction evidence="1">
        <text>AMP + ATP = 2 ADP</text>
        <dbReference type="Rhea" id="RHEA:12973"/>
        <dbReference type="ChEBI" id="CHEBI:30616"/>
        <dbReference type="ChEBI" id="CHEBI:456215"/>
        <dbReference type="ChEBI" id="CHEBI:456216"/>
        <dbReference type="EC" id="2.7.4.3"/>
    </reaction>
</comment>
<comment type="pathway">
    <text evidence="1">Purine metabolism; AMP biosynthesis via salvage pathway; AMP from ADP: step 1/1.</text>
</comment>
<comment type="subunit">
    <text evidence="1">Monomer.</text>
</comment>
<comment type="subcellular location">
    <subcellularLocation>
        <location evidence="1">Cytoplasm</location>
    </subcellularLocation>
</comment>
<comment type="domain">
    <text evidence="1">Consists of three domains, a large central CORE domain and two small peripheral domains, NMPbind and LID, which undergo movements during catalysis. The LID domain closes over the site of phosphoryl transfer upon ATP binding. Assembling and dissambling the active center during each catalytic cycle provides an effective means to prevent ATP hydrolysis. Some bacteria have evolved a zinc-coordinating structure that stabilizes the LID domain.</text>
</comment>
<comment type="similarity">
    <text evidence="1">Belongs to the adenylate kinase family.</text>
</comment>
<protein>
    <recommendedName>
        <fullName evidence="1">Adenylate kinase</fullName>
        <shortName evidence="1">AK</shortName>
        <ecNumber evidence="1">2.7.4.3</ecNumber>
    </recommendedName>
    <alternativeName>
        <fullName evidence="1">ATP-AMP transphosphorylase</fullName>
    </alternativeName>
    <alternativeName>
        <fullName evidence="1">ATP:AMP phosphotransferase</fullName>
    </alternativeName>
    <alternativeName>
        <fullName evidence="1">Adenylate monophosphate kinase</fullName>
    </alternativeName>
</protein>
<feature type="chain" id="PRO_0000274858" description="Adenylate kinase">
    <location>
        <begin position="1"/>
        <end position="212"/>
    </location>
</feature>
<feature type="region of interest" description="NMP" evidence="1">
    <location>
        <begin position="30"/>
        <end position="59"/>
    </location>
</feature>
<feature type="region of interest" description="LID" evidence="1">
    <location>
        <begin position="122"/>
        <end position="160"/>
    </location>
</feature>
<feature type="binding site" evidence="1">
    <location>
        <begin position="10"/>
        <end position="15"/>
    </location>
    <ligand>
        <name>ATP</name>
        <dbReference type="ChEBI" id="CHEBI:30616"/>
    </ligand>
</feature>
<feature type="binding site" evidence="1">
    <location>
        <position position="36"/>
    </location>
    <ligand>
        <name>AMP</name>
        <dbReference type="ChEBI" id="CHEBI:456215"/>
    </ligand>
</feature>
<feature type="binding site" evidence="1">
    <location>
        <begin position="57"/>
        <end position="59"/>
    </location>
    <ligand>
        <name>AMP</name>
        <dbReference type="ChEBI" id="CHEBI:456215"/>
    </ligand>
</feature>
<feature type="binding site" evidence="1">
    <location>
        <begin position="85"/>
        <end position="88"/>
    </location>
    <ligand>
        <name>AMP</name>
        <dbReference type="ChEBI" id="CHEBI:456215"/>
    </ligand>
</feature>
<feature type="binding site" evidence="1">
    <location>
        <position position="92"/>
    </location>
    <ligand>
        <name>AMP</name>
        <dbReference type="ChEBI" id="CHEBI:456215"/>
    </ligand>
</feature>
<feature type="binding site" evidence="1">
    <location>
        <position position="123"/>
    </location>
    <ligand>
        <name>ATP</name>
        <dbReference type="ChEBI" id="CHEBI:30616"/>
    </ligand>
</feature>
<feature type="binding site" evidence="1">
    <location>
        <position position="126"/>
    </location>
    <ligand>
        <name>Zn(2+)</name>
        <dbReference type="ChEBI" id="CHEBI:29105"/>
        <note>structural</note>
    </ligand>
</feature>
<feature type="binding site" evidence="1">
    <location>
        <position position="129"/>
    </location>
    <ligand>
        <name>Zn(2+)</name>
        <dbReference type="ChEBI" id="CHEBI:29105"/>
        <note>structural</note>
    </ligand>
</feature>
<feature type="binding site" evidence="1">
    <location>
        <begin position="132"/>
        <end position="133"/>
    </location>
    <ligand>
        <name>ATP</name>
        <dbReference type="ChEBI" id="CHEBI:30616"/>
    </ligand>
</feature>
<feature type="binding site" evidence="1">
    <location>
        <position position="146"/>
    </location>
    <ligand>
        <name>Zn(2+)</name>
        <dbReference type="ChEBI" id="CHEBI:29105"/>
        <note>structural</note>
    </ligand>
</feature>
<feature type="binding site" evidence="1">
    <location>
        <position position="149"/>
    </location>
    <ligand>
        <name>Zn(2+)</name>
        <dbReference type="ChEBI" id="CHEBI:29105"/>
        <note>structural</note>
    </ligand>
</feature>
<feature type="binding site" evidence="1">
    <location>
        <position position="157"/>
    </location>
    <ligand>
        <name>AMP</name>
        <dbReference type="ChEBI" id="CHEBI:456215"/>
    </ligand>
</feature>
<feature type="binding site" evidence="1">
    <location>
        <position position="168"/>
    </location>
    <ligand>
        <name>AMP</name>
        <dbReference type="ChEBI" id="CHEBI:456215"/>
    </ligand>
</feature>
<feature type="binding site" evidence="1">
    <location>
        <position position="196"/>
    </location>
    <ligand>
        <name>ATP</name>
        <dbReference type="ChEBI" id="CHEBI:30616"/>
    </ligand>
</feature>
<reference key="1">
    <citation type="journal article" date="2006" name="PLoS Genet.">
        <title>Genome sequence of Rickettsia bellii illuminates the role of amoebae in gene exchanges between intracellular pathogens.</title>
        <authorList>
            <person name="Ogata H."/>
            <person name="La Scola B."/>
            <person name="Audic S."/>
            <person name="Renesto P."/>
            <person name="Blanc G."/>
            <person name="Robert C."/>
            <person name="Fournier P.-E."/>
            <person name="Claverie J.-M."/>
            <person name="Raoult D."/>
        </authorList>
    </citation>
    <scope>NUCLEOTIDE SEQUENCE [LARGE SCALE GENOMIC DNA]</scope>
    <source>
        <strain>RML369-C</strain>
    </source>
</reference>
<sequence length="212" mass="24590">MIIIFLGPPGAGKGTQGKKIAKKIHLPHIAIGDIFRAIIKTSSKDAEVINSYVEQGKLIPDEIVNHIIKNFLSSSDYKKGYILDGYPRNLEQAKFFESFVTEKIKVIYLNVSDELLIKRILGRYSCKSCGKIYNDYFLKPRIDKICDVCKSSVFEYRKDDNEEVIKERINIFKTETYPLIQHYKNNDDFYMIDGNKNEEQIEDHIEKVLKIN</sequence>
<dbReference type="EC" id="2.7.4.3" evidence="1"/>
<dbReference type="EMBL" id="CP000087">
    <property type="protein sequence ID" value="ABE05122.1"/>
    <property type="molecule type" value="Genomic_DNA"/>
</dbReference>
<dbReference type="RefSeq" id="WP_011477700.1">
    <property type="nucleotide sequence ID" value="NC_007940.1"/>
</dbReference>
<dbReference type="SMR" id="Q1RHP2"/>
<dbReference type="KEGG" id="rbe:RBE_1041"/>
<dbReference type="eggNOG" id="COG0563">
    <property type="taxonomic scope" value="Bacteria"/>
</dbReference>
<dbReference type="HOGENOM" id="CLU_032354_1_2_5"/>
<dbReference type="OrthoDB" id="9805030at2"/>
<dbReference type="UniPathway" id="UPA00588">
    <property type="reaction ID" value="UER00649"/>
</dbReference>
<dbReference type="Proteomes" id="UP000001951">
    <property type="component" value="Chromosome"/>
</dbReference>
<dbReference type="GO" id="GO:0005737">
    <property type="term" value="C:cytoplasm"/>
    <property type="evidence" value="ECO:0007669"/>
    <property type="project" value="UniProtKB-SubCell"/>
</dbReference>
<dbReference type="GO" id="GO:0004017">
    <property type="term" value="F:adenylate kinase activity"/>
    <property type="evidence" value="ECO:0007669"/>
    <property type="project" value="UniProtKB-UniRule"/>
</dbReference>
<dbReference type="GO" id="GO:0005524">
    <property type="term" value="F:ATP binding"/>
    <property type="evidence" value="ECO:0007669"/>
    <property type="project" value="UniProtKB-UniRule"/>
</dbReference>
<dbReference type="GO" id="GO:0008270">
    <property type="term" value="F:zinc ion binding"/>
    <property type="evidence" value="ECO:0007669"/>
    <property type="project" value="UniProtKB-UniRule"/>
</dbReference>
<dbReference type="GO" id="GO:0044209">
    <property type="term" value="P:AMP salvage"/>
    <property type="evidence" value="ECO:0007669"/>
    <property type="project" value="UniProtKB-UniRule"/>
</dbReference>
<dbReference type="CDD" id="cd01428">
    <property type="entry name" value="ADK"/>
    <property type="match status" value="1"/>
</dbReference>
<dbReference type="Gene3D" id="3.40.50.300">
    <property type="entry name" value="P-loop containing nucleotide triphosphate hydrolases"/>
    <property type="match status" value="1"/>
</dbReference>
<dbReference type="HAMAP" id="MF_00235">
    <property type="entry name" value="Adenylate_kinase_Adk"/>
    <property type="match status" value="1"/>
</dbReference>
<dbReference type="InterPro" id="IPR006259">
    <property type="entry name" value="Adenyl_kin_sub"/>
</dbReference>
<dbReference type="InterPro" id="IPR000850">
    <property type="entry name" value="Adenylat/UMP-CMP_kin"/>
</dbReference>
<dbReference type="InterPro" id="IPR033690">
    <property type="entry name" value="Adenylat_kinase_CS"/>
</dbReference>
<dbReference type="InterPro" id="IPR007862">
    <property type="entry name" value="Adenylate_kinase_lid-dom"/>
</dbReference>
<dbReference type="InterPro" id="IPR036193">
    <property type="entry name" value="ADK_active_lid_dom_sf"/>
</dbReference>
<dbReference type="InterPro" id="IPR027417">
    <property type="entry name" value="P-loop_NTPase"/>
</dbReference>
<dbReference type="NCBIfam" id="TIGR01351">
    <property type="entry name" value="adk"/>
    <property type="match status" value="1"/>
</dbReference>
<dbReference type="NCBIfam" id="NF001383">
    <property type="entry name" value="PRK00279.2-1"/>
    <property type="match status" value="1"/>
</dbReference>
<dbReference type="PANTHER" id="PTHR23359">
    <property type="entry name" value="NUCLEOTIDE KINASE"/>
    <property type="match status" value="1"/>
</dbReference>
<dbReference type="Pfam" id="PF00406">
    <property type="entry name" value="ADK"/>
    <property type="match status" value="1"/>
</dbReference>
<dbReference type="Pfam" id="PF05191">
    <property type="entry name" value="ADK_lid"/>
    <property type="match status" value="1"/>
</dbReference>
<dbReference type="PRINTS" id="PR00094">
    <property type="entry name" value="ADENYLTKNASE"/>
</dbReference>
<dbReference type="SUPFAM" id="SSF57774">
    <property type="entry name" value="Microbial and mitochondrial ADK, insert 'zinc finger' domain"/>
    <property type="match status" value="1"/>
</dbReference>
<dbReference type="SUPFAM" id="SSF52540">
    <property type="entry name" value="P-loop containing nucleoside triphosphate hydrolases"/>
    <property type="match status" value="1"/>
</dbReference>
<dbReference type="PROSITE" id="PS00113">
    <property type="entry name" value="ADENYLATE_KINASE"/>
    <property type="match status" value="1"/>
</dbReference>
<gene>
    <name evidence="1" type="primary">adk</name>
    <name type="ordered locus">RBE_1041</name>
</gene>
<accession>Q1RHP2</accession>
<keyword id="KW-0067">ATP-binding</keyword>
<keyword id="KW-0963">Cytoplasm</keyword>
<keyword id="KW-0418">Kinase</keyword>
<keyword id="KW-0479">Metal-binding</keyword>
<keyword id="KW-0545">Nucleotide biosynthesis</keyword>
<keyword id="KW-0547">Nucleotide-binding</keyword>
<keyword id="KW-0808">Transferase</keyword>
<keyword id="KW-0862">Zinc</keyword>
<evidence type="ECO:0000255" key="1">
    <source>
        <dbReference type="HAMAP-Rule" id="MF_00235"/>
    </source>
</evidence>